<gene>
    <name evidence="1" type="primary">acpS</name>
    <name type="ordered locus">BQ04260</name>
</gene>
<sequence length="133" mass="14996">MIVGLGNDLIDIRRIERMLVRYGDRFVQRIFTDIEQNKSESLQKKSSSYAKRFAAKEACAKALGTGIACGVNWKDMGVINLPSGKPIMKLTNRAQMQLQKLLPLHHDAIIHLSMTDDFPWAQAFIIIEALPRG</sequence>
<comment type="function">
    <text evidence="1">Transfers the 4'-phosphopantetheine moiety from coenzyme A to a Ser of acyl-carrier-protein.</text>
</comment>
<comment type="catalytic activity">
    <reaction evidence="1">
        <text>apo-[ACP] + CoA = holo-[ACP] + adenosine 3',5'-bisphosphate + H(+)</text>
        <dbReference type="Rhea" id="RHEA:12068"/>
        <dbReference type="Rhea" id="RHEA-COMP:9685"/>
        <dbReference type="Rhea" id="RHEA-COMP:9690"/>
        <dbReference type="ChEBI" id="CHEBI:15378"/>
        <dbReference type="ChEBI" id="CHEBI:29999"/>
        <dbReference type="ChEBI" id="CHEBI:57287"/>
        <dbReference type="ChEBI" id="CHEBI:58343"/>
        <dbReference type="ChEBI" id="CHEBI:64479"/>
        <dbReference type="EC" id="2.7.8.7"/>
    </reaction>
</comment>
<comment type="cofactor">
    <cofactor evidence="1">
        <name>Mg(2+)</name>
        <dbReference type="ChEBI" id="CHEBI:18420"/>
    </cofactor>
</comment>
<comment type="subcellular location">
    <subcellularLocation>
        <location evidence="1">Cytoplasm</location>
    </subcellularLocation>
</comment>
<comment type="similarity">
    <text evidence="1">Belongs to the P-Pant transferase superfamily. AcpS family.</text>
</comment>
<evidence type="ECO:0000255" key="1">
    <source>
        <dbReference type="HAMAP-Rule" id="MF_00101"/>
    </source>
</evidence>
<reference key="1">
    <citation type="journal article" date="2004" name="Proc. Natl. Acad. Sci. U.S.A.">
        <title>The louse-borne human pathogen Bartonella quintana is a genomic derivative of the zoonotic agent Bartonella henselae.</title>
        <authorList>
            <person name="Alsmark U.C.M."/>
            <person name="Frank A.C."/>
            <person name="Karlberg E.O."/>
            <person name="Legault B.-A."/>
            <person name="Ardell D.H."/>
            <person name="Canbaeck B."/>
            <person name="Eriksson A.-S."/>
            <person name="Naeslund A.K."/>
            <person name="Handley S.A."/>
            <person name="Huvet M."/>
            <person name="La Scola B."/>
            <person name="Holmberg M."/>
            <person name="Andersson S.G.E."/>
        </authorList>
    </citation>
    <scope>NUCLEOTIDE SEQUENCE [LARGE SCALE GENOMIC DNA]</scope>
    <source>
        <strain>Toulouse</strain>
    </source>
</reference>
<protein>
    <recommendedName>
        <fullName evidence="1">Holo-[acyl-carrier-protein] synthase</fullName>
        <shortName evidence="1">Holo-ACP synthase</shortName>
        <ecNumber evidence="1">2.7.8.7</ecNumber>
    </recommendedName>
    <alternativeName>
        <fullName evidence="1">4'-phosphopantetheinyl transferase AcpS</fullName>
    </alternativeName>
</protein>
<dbReference type="EC" id="2.7.8.7" evidence="1"/>
<dbReference type="EMBL" id="BX897700">
    <property type="protein sequence ID" value="CAF25925.1"/>
    <property type="molecule type" value="Genomic_DNA"/>
</dbReference>
<dbReference type="RefSeq" id="WP_011179214.1">
    <property type="nucleotide sequence ID" value="NC_005955.1"/>
</dbReference>
<dbReference type="SMR" id="Q6G084"/>
<dbReference type="KEGG" id="bqu:BQ04260"/>
<dbReference type="eggNOG" id="COG0736">
    <property type="taxonomic scope" value="Bacteria"/>
</dbReference>
<dbReference type="HOGENOM" id="CLU_089696_0_2_5"/>
<dbReference type="OrthoDB" id="517356at2"/>
<dbReference type="Proteomes" id="UP000000597">
    <property type="component" value="Chromosome"/>
</dbReference>
<dbReference type="GO" id="GO:0005737">
    <property type="term" value="C:cytoplasm"/>
    <property type="evidence" value="ECO:0007669"/>
    <property type="project" value="UniProtKB-SubCell"/>
</dbReference>
<dbReference type="GO" id="GO:0008897">
    <property type="term" value="F:holo-[acyl-carrier-protein] synthase activity"/>
    <property type="evidence" value="ECO:0007669"/>
    <property type="project" value="UniProtKB-UniRule"/>
</dbReference>
<dbReference type="GO" id="GO:0000287">
    <property type="term" value="F:magnesium ion binding"/>
    <property type="evidence" value="ECO:0007669"/>
    <property type="project" value="UniProtKB-UniRule"/>
</dbReference>
<dbReference type="GO" id="GO:0006633">
    <property type="term" value="P:fatty acid biosynthetic process"/>
    <property type="evidence" value="ECO:0007669"/>
    <property type="project" value="UniProtKB-UniRule"/>
</dbReference>
<dbReference type="Gene3D" id="3.90.470.20">
    <property type="entry name" value="4'-phosphopantetheinyl transferase domain"/>
    <property type="match status" value="1"/>
</dbReference>
<dbReference type="HAMAP" id="MF_00101">
    <property type="entry name" value="AcpS"/>
    <property type="match status" value="1"/>
</dbReference>
<dbReference type="InterPro" id="IPR008278">
    <property type="entry name" value="4-PPantetheinyl_Trfase_dom"/>
</dbReference>
<dbReference type="InterPro" id="IPR037143">
    <property type="entry name" value="4-PPantetheinyl_Trfase_dom_sf"/>
</dbReference>
<dbReference type="InterPro" id="IPR002582">
    <property type="entry name" value="ACPS"/>
</dbReference>
<dbReference type="InterPro" id="IPR004568">
    <property type="entry name" value="Ppantetheine-prot_Trfase_dom"/>
</dbReference>
<dbReference type="NCBIfam" id="TIGR00516">
    <property type="entry name" value="acpS"/>
    <property type="match status" value="1"/>
</dbReference>
<dbReference type="NCBIfam" id="TIGR00556">
    <property type="entry name" value="pantethn_trn"/>
    <property type="match status" value="1"/>
</dbReference>
<dbReference type="Pfam" id="PF01648">
    <property type="entry name" value="ACPS"/>
    <property type="match status" value="1"/>
</dbReference>
<dbReference type="SUPFAM" id="SSF56214">
    <property type="entry name" value="4'-phosphopantetheinyl transferase"/>
    <property type="match status" value="1"/>
</dbReference>
<keyword id="KW-0963">Cytoplasm</keyword>
<keyword id="KW-0275">Fatty acid biosynthesis</keyword>
<keyword id="KW-0276">Fatty acid metabolism</keyword>
<keyword id="KW-0444">Lipid biosynthesis</keyword>
<keyword id="KW-0443">Lipid metabolism</keyword>
<keyword id="KW-0460">Magnesium</keyword>
<keyword id="KW-0479">Metal-binding</keyword>
<keyword id="KW-0808">Transferase</keyword>
<feature type="chain" id="PRO_0000175615" description="Holo-[acyl-carrier-protein] synthase">
    <location>
        <begin position="1"/>
        <end position="133"/>
    </location>
</feature>
<feature type="binding site" evidence="1">
    <location>
        <position position="8"/>
    </location>
    <ligand>
        <name>Mg(2+)</name>
        <dbReference type="ChEBI" id="CHEBI:18420"/>
    </ligand>
</feature>
<feature type="binding site" evidence="1">
    <location>
        <position position="57"/>
    </location>
    <ligand>
        <name>Mg(2+)</name>
        <dbReference type="ChEBI" id="CHEBI:18420"/>
    </ligand>
</feature>
<proteinExistence type="inferred from homology"/>
<accession>Q6G084</accession>
<name>ACPS_BARQU</name>
<organism>
    <name type="scientific">Bartonella quintana (strain Toulouse)</name>
    <name type="common">Rochalimaea quintana</name>
    <dbReference type="NCBI Taxonomy" id="283165"/>
    <lineage>
        <taxon>Bacteria</taxon>
        <taxon>Pseudomonadati</taxon>
        <taxon>Pseudomonadota</taxon>
        <taxon>Alphaproteobacteria</taxon>
        <taxon>Hyphomicrobiales</taxon>
        <taxon>Bartonellaceae</taxon>
        <taxon>Bartonella</taxon>
    </lineage>
</organism>